<organism>
    <name type="scientific">Shewanella baltica (strain OS195)</name>
    <dbReference type="NCBI Taxonomy" id="399599"/>
    <lineage>
        <taxon>Bacteria</taxon>
        <taxon>Pseudomonadati</taxon>
        <taxon>Pseudomonadota</taxon>
        <taxon>Gammaproteobacteria</taxon>
        <taxon>Alteromonadales</taxon>
        <taxon>Shewanellaceae</taxon>
        <taxon>Shewanella</taxon>
    </lineage>
</organism>
<feature type="chain" id="PRO_0000332900" description="Cysteine--tRNA ligase">
    <location>
        <begin position="1"/>
        <end position="459"/>
    </location>
</feature>
<feature type="short sequence motif" description="'HIGH' region">
    <location>
        <begin position="30"/>
        <end position="40"/>
    </location>
</feature>
<feature type="short sequence motif" description="'KMSKS' region">
    <location>
        <begin position="266"/>
        <end position="270"/>
    </location>
</feature>
<feature type="binding site" evidence="1">
    <location>
        <position position="28"/>
    </location>
    <ligand>
        <name>Zn(2+)</name>
        <dbReference type="ChEBI" id="CHEBI:29105"/>
    </ligand>
</feature>
<feature type="binding site" evidence="1">
    <location>
        <position position="209"/>
    </location>
    <ligand>
        <name>Zn(2+)</name>
        <dbReference type="ChEBI" id="CHEBI:29105"/>
    </ligand>
</feature>
<feature type="binding site" evidence="1">
    <location>
        <position position="234"/>
    </location>
    <ligand>
        <name>Zn(2+)</name>
        <dbReference type="ChEBI" id="CHEBI:29105"/>
    </ligand>
</feature>
<feature type="binding site" evidence="1">
    <location>
        <position position="238"/>
    </location>
    <ligand>
        <name>Zn(2+)</name>
        <dbReference type="ChEBI" id="CHEBI:29105"/>
    </ligand>
</feature>
<feature type="binding site" evidence="1">
    <location>
        <position position="269"/>
    </location>
    <ligand>
        <name>ATP</name>
        <dbReference type="ChEBI" id="CHEBI:30616"/>
    </ligand>
</feature>
<evidence type="ECO:0000255" key="1">
    <source>
        <dbReference type="HAMAP-Rule" id="MF_00041"/>
    </source>
</evidence>
<gene>
    <name evidence="1" type="primary">cysS</name>
    <name type="ordered locus">Sbal195_1624</name>
</gene>
<name>SYC_SHEB9</name>
<proteinExistence type="inferred from homology"/>
<accession>A9KWH4</accession>
<sequence>MLKIYNSITRQKQEFKPITPGKIGMYVCGVTIYDLCHIGHGRTFVSFDMIVRYLRYAGYEVNFQRNITDVDDKIIKRANENNESCEALTERLIGEMHQDFDALNMLRPDFEPRATLHIAEIIDMVELLLARGHAYVASDGDVLFSVASYPDYGRLSGQNLDQLQAGARVEVDETKQNPMDFVLWKMSKPGEPTWESPWGPGRPGWHIECSAMNSKHLGLHFDIHGGGSDLQFPHHENEIAQSCCAHDTPYVNYWMHTGMVMVDREKMSKSLGNFFTIRDVLGHYDAETVRYFLLSGHYRSQLNYSEDNLKQARSALERLYTAIKDVDLTVAAAPAEEFIAKFKAAMDDDFNTPEAYSVLFDMVREINRLKLTDMAQASALAVTLKQLADVLGLLSQEPEAFFQGGGSDDEVAEIEALIVERNRARTEKDWAAADVARNRLNELGVELEDGPSGTTWRKK</sequence>
<dbReference type="EC" id="6.1.1.16" evidence="1"/>
<dbReference type="EMBL" id="CP000891">
    <property type="protein sequence ID" value="ABX48797.1"/>
    <property type="molecule type" value="Genomic_DNA"/>
</dbReference>
<dbReference type="RefSeq" id="WP_006085363.1">
    <property type="nucleotide sequence ID" value="NC_009997.1"/>
</dbReference>
<dbReference type="SMR" id="A9KWH4"/>
<dbReference type="GeneID" id="11771857"/>
<dbReference type="KEGG" id="sbn:Sbal195_1624"/>
<dbReference type="HOGENOM" id="CLU_013528_0_1_6"/>
<dbReference type="Proteomes" id="UP000000770">
    <property type="component" value="Chromosome"/>
</dbReference>
<dbReference type="GO" id="GO:0005829">
    <property type="term" value="C:cytosol"/>
    <property type="evidence" value="ECO:0007669"/>
    <property type="project" value="TreeGrafter"/>
</dbReference>
<dbReference type="GO" id="GO:0005524">
    <property type="term" value="F:ATP binding"/>
    <property type="evidence" value="ECO:0007669"/>
    <property type="project" value="UniProtKB-UniRule"/>
</dbReference>
<dbReference type="GO" id="GO:0004817">
    <property type="term" value="F:cysteine-tRNA ligase activity"/>
    <property type="evidence" value="ECO:0007669"/>
    <property type="project" value="UniProtKB-UniRule"/>
</dbReference>
<dbReference type="GO" id="GO:0008270">
    <property type="term" value="F:zinc ion binding"/>
    <property type="evidence" value="ECO:0007669"/>
    <property type="project" value="UniProtKB-UniRule"/>
</dbReference>
<dbReference type="GO" id="GO:0006423">
    <property type="term" value="P:cysteinyl-tRNA aminoacylation"/>
    <property type="evidence" value="ECO:0007669"/>
    <property type="project" value="UniProtKB-UniRule"/>
</dbReference>
<dbReference type="CDD" id="cd07963">
    <property type="entry name" value="Anticodon_Ia_Cys"/>
    <property type="match status" value="1"/>
</dbReference>
<dbReference type="CDD" id="cd00672">
    <property type="entry name" value="CysRS_core"/>
    <property type="match status" value="1"/>
</dbReference>
<dbReference type="FunFam" id="1.20.120.1910:FF:000001">
    <property type="entry name" value="Cysteine--tRNA ligase"/>
    <property type="match status" value="1"/>
</dbReference>
<dbReference type="FunFam" id="3.40.50.620:FF:000009">
    <property type="entry name" value="Cysteine--tRNA ligase"/>
    <property type="match status" value="1"/>
</dbReference>
<dbReference type="Gene3D" id="1.20.120.1910">
    <property type="entry name" value="Cysteine-tRNA ligase, C-terminal anti-codon recognition domain"/>
    <property type="match status" value="1"/>
</dbReference>
<dbReference type="Gene3D" id="3.40.50.620">
    <property type="entry name" value="HUPs"/>
    <property type="match status" value="1"/>
</dbReference>
<dbReference type="HAMAP" id="MF_00041">
    <property type="entry name" value="Cys_tRNA_synth"/>
    <property type="match status" value="1"/>
</dbReference>
<dbReference type="InterPro" id="IPR015803">
    <property type="entry name" value="Cys-tRNA-ligase"/>
</dbReference>
<dbReference type="InterPro" id="IPR015273">
    <property type="entry name" value="Cys-tRNA-synt_Ia_DALR"/>
</dbReference>
<dbReference type="InterPro" id="IPR024909">
    <property type="entry name" value="Cys-tRNA/MSH_ligase"/>
</dbReference>
<dbReference type="InterPro" id="IPR056411">
    <property type="entry name" value="CysS_C"/>
</dbReference>
<dbReference type="InterPro" id="IPR014729">
    <property type="entry name" value="Rossmann-like_a/b/a_fold"/>
</dbReference>
<dbReference type="InterPro" id="IPR032678">
    <property type="entry name" value="tRNA-synt_1_cat_dom"/>
</dbReference>
<dbReference type="InterPro" id="IPR009080">
    <property type="entry name" value="tRNAsynth_Ia_anticodon-bd"/>
</dbReference>
<dbReference type="NCBIfam" id="TIGR00435">
    <property type="entry name" value="cysS"/>
    <property type="match status" value="1"/>
</dbReference>
<dbReference type="PANTHER" id="PTHR10890:SF3">
    <property type="entry name" value="CYSTEINE--TRNA LIGASE, CYTOPLASMIC"/>
    <property type="match status" value="1"/>
</dbReference>
<dbReference type="PANTHER" id="PTHR10890">
    <property type="entry name" value="CYSTEINYL-TRNA SYNTHETASE"/>
    <property type="match status" value="1"/>
</dbReference>
<dbReference type="Pfam" id="PF23493">
    <property type="entry name" value="CysS_C"/>
    <property type="match status" value="1"/>
</dbReference>
<dbReference type="Pfam" id="PF09190">
    <property type="entry name" value="DALR_2"/>
    <property type="match status" value="1"/>
</dbReference>
<dbReference type="Pfam" id="PF01406">
    <property type="entry name" value="tRNA-synt_1e"/>
    <property type="match status" value="1"/>
</dbReference>
<dbReference type="PRINTS" id="PR00983">
    <property type="entry name" value="TRNASYNTHCYS"/>
</dbReference>
<dbReference type="SMART" id="SM00840">
    <property type="entry name" value="DALR_2"/>
    <property type="match status" value="1"/>
</dbReference>
<dbReference type="SUPFAM" id="SSF47323">
    <property type="entry name" value="Anticodon-binding domain of a subclass of class I aminoacyl-tRNA synthetases"/>
    <property type="match status" value="1"/>
</dbReference>
<dbReference type="SUPFAM" id="SSF52374">
    <property type="entry name" value="Nucleotidylyl transferase"/>
    <property type="match status" value="1"/>
</dbReference>
<keyword id="KW-0030">Aminoacyl-tRNA synthetase</keyword>
<keyword id="KW-0067">ATP-binding</keyword>
<keyword id="KW-0963">Cytoplasm</keyword>
<keyword id="KW-0436">Ligase</keyword>
<keyword id="KW-0479">Metal-binding</keyword>
<keyword id="KW-0547">Nucleotide-binding</keyword>
<keyword id="KW-0648">Protein biosynthesis</keyword>
<keyword id="KW-0862">Zinc</keyword>
<reference key="1">
    <citation type="submission" date="2007-11" db="EMBL/GenBank/DDBJ databases">
        <title>Complete sequence of chromosome of Shewanella baltica OS195.</title>
        <authorList>
            <consortium name="US DOE Joint Genome Institute"/>
            <person name="Copeland A."/>
            <person name="Lucas S."/>
            <person name="Lapidus A."/>
            <person name="Barry K."/>
            <person name="Glavina del Rio T."/>
            <person name="Dalin E."/>
            <person name="Tice H."/>
            <person name="Pitluck S."/>
            <person name="Chain P."/>
            <person name="Malfatti S."/>
            <person name="Shin M."/>
            <person name="Vergez L."/>
            <person name="Schmutz J."/>
            <person name="Larimer F."/>
            <person name="Land M."/>
            <person name="Hauser L."/>
            <person name="Kyrpides N."/>
            <person name="Kim E."/>
            <person name="Brettar I."/>
            <person name="Rodrigues J."/>
            <person name="Konstantinidis K."/>
            <person name="Klappenbach J."/>
            <person name="Hofle M."/>
            <person name="Tiedje J."/>
            <person name="Richardson P."/>
        </authorList>
    </citation>
    <scope>NUCLEOTIDE SEQUENCE [LARGE SCALE GENOMIC DNA]</scope>
    <source>
        <strain>OS195</strain>
    </source>
</reference>
<comment type="catalytic activity">
    <reaction evidence="1">
        <text>tRNA(Cys) + L-cysteine + ATP = L-cysteinyl-tRNA(Cys) + AMP + diphosphate</text>
        <dbReference type="Rhea" id="RHEA:17773"/>
        <dbReference type="Rhea" id="RHEA-COMP:9661"/>
        <dbReference type="Rhea" id="RHEA-COMP:9679"/>
        <dbReference type="ChEBI" id="CHEBI:30616"/>
        <dbReference type="ChEBI" id="CHEBI:33019"/>
        <dbReference type="ChEBI" id="CHEBI:35235"/>
        <dbReference type="ChEBI" id="CHEBI:78442"/>
        <dbReference type="ChEBI" id="CHEBI:78517"/>
        <dbReference type="ChEBI" id="CHEBI:456215"/>
        <dbReference type="EC" id="6.1.1.16"/>
    </reaction>
</comment>
<comment type="cofactor">
    <cofactor evidence="1">
        <name>Zn(2+)</name>
        <dbReference type="ChEBI" id="CHEBI:29105"/>
    </cofactor>
    <text evidence="1">Binds 1 zinc ion per subunit.</text>
</comment>
<comment type="subunit">
    <text evidence="1">Monomer.</text>
</comment>
<comment type="subcellular location">
    <subcellularLocation>
        <location evidence="1">Cytoplasm</location>
    </subcellularLocation>
</comment>
<comment type="similarity">
    <text evidence="1">Belongs to the class-I aminoacyl-tRNA synthetase family.</text>
</comment>
<protein>
    <recommendedName>
        <fullName evidence="1">Cysteine--tRNA ligase</fullName>
        <ecNumber evidence="1">6.1.1.16</ecNumber>
    </recommendedName>
    <alternativeName>
        <fullName evidence="1">Cysteinyl-tRNA synthetase</fullName>
        <shortName evidence="1">CysRS</shortName>
    </alternativeName>
</protein>